<sequence length="236" mass="27062">MPISVDKAVIARLKVHGETFEILVDPYLARDFKEGKEVPIEEILATPYVFKDAHKGDKASEKEMEKIFGTSDPYEVAKIILRKGEVQLTAQQRREMLEEKKRQIATIIHRHAVDPRTGYPHPVDRILRAMEEVGVRVDIFKDAEAQVQDVIKAIRRILPLRIEMKVIAVKIPSEYVGRAYGEVRKFGRIKKEEWASDGSWLFLIEIPGGVEEEFYEKLNALTKGNAQTKLIERKGL</sequence>
<accession>Q9V121</accession>
<accession>G8ZJ73</accession>
<evidence type="ECO:0000305" key="1"/>
<proteinExistence type="inferred from homology"/>
<name>SDO1_PYRAB</name>
<reference key="1">
    <citation type="journal article" date="2003" name="Mol. Microbiol.">
        <title>An integrated analysis of the genome of the hyperthermophilic archaeon Pyrococcus abyssi.</title>
        <authorList>
            <person name="Cohen G.N."/>
            <person name="Barbe V."/>
            <person name="Flament D."/>
            <person name="Galperin M."/>
            <person name="Heilig R."/>
            <person name="Lecompte O."/>
            <person name="Poch O."/>
            <person name="Prieur D."/>
            <person name="Querellou J."/>
            <person name="Ripp R."/>
            <person name="Thierry J.-C."/>
            <person name="Van der Oost J."/>
            <person name="Weissenbach J."/>
            <person name="Zivanovic Y."/>
            <person name="Forterre P."/>
        </authorList>
    </citation>
    <scope>NUCLEOTIDE SEQUENCE [LARGE SCALE GENOMIC DNA]</scope>
    <source>
        <strain>GE5 / Orsay</strain>
    </source>
</reference>
<reference key="2">
    <citation type="journal article" date="2012" name="Curr. Microbiol.">
        <title>Re-annotation of two hyperthermophilic archaea Pyrococcus abyssi GE5 and Pyrococcus furiosus DSM 3638.</title>
        <authorList>
            <person name="Gao J."/>
            <person name="Wang J."/>
        </authorList>
    </citation>
    <scope>GENOME REANNOTATION</scope>
    <source>
        <strain>GE5 / Orsay</strain>
    </source>
</reference>
<comment type="similarity">
    <text evidence="1">Belongs to the SDO1/SBDS family.</text>
</comment>
<organism>
    <name type="scientific">Pyrococcus abyssi (strain GE5 / Orsay)</name>
    <dbReference type="NCBI Taxonomy" id="272844"/>
    <lineage>
        <taxon>Archaea</taxon>
        <taxon>Methanobacteriati</taxon>
        <taxon>Methanobacteriota</taxon>
        <taxon>Thermococci</taxon>
        <taxon>Thermococcales</taxon>
        <taxon>Thermococcaceae</taxon>
        <taxon>Pyrococcus</taxon>
    </lineage>
</organism>
<feature type="chain" id="PRO_0000123771" description="Ribosome maturation protein SDO1 homolog">
    <location>
        <begin position="1"/>
        <end position="236"/>
    </location>
</feature>
<protein>
    <recommendedName>
        <fullName>Ribosome maturation protein SDO1 homolog</fullName>
    </recommendedName>
</protein>
<gene>
    <name type="ordered locus">PYRAB06080</name>
    <name type="ORF">PAB0418</name>
</gene>
<dbReference type="EMBL" id="AJ248284">
    <property type="protein sequence ID" value="CAB49530.1"/>
    <property type="molecule type" value="Genomic_DNA"/>
</dbReference>
<dbReference type="EMBL" id="HE613800">
    <property type="protein sequence ID" value="CCE70000.1"/>
    <property type="molecule type" value="Genomic_DNA"/>
</dbReference>
<dbReference type="PIR" id="C75181">
    <property type="entry name" value="C75181"/>
</dbReference>
<dbReference type="RefSeq" id="WP_010867732.1">
    <property type="nucleotide sequence ID" value="NC_000868.1"/>
</dbReference>
<dbReference type="SMR" id="Q9V121"/>
<dbReference type="STRING" id="272844.PAB0418"/>
<dbReference type="KEGG" id="pab:PAB0418"/>
<dbReference type="PATRIC" id="fig|272844.11.peg.646"/>
<dbReference type="eggNOG" id="arCOG04187">
    <property type="taxonomic scope" value="Archaea"/>
</dbReference>
<dbReference type="HOGENOM" id="CLU_043216_2_0_2"/>
<dbReference type="OrthoDB" id="84504at2157"/>
<dbReference type="PhylomeDB" id="Q9V121"/>
<dbReference type="Proteomes" id="UP000000810">
    <property type="component" value="Chromosome"/>
</dbReference>
<dbReference type="Proteomes" id="UP000009139">
    <property type="component" value="Chromosome"/>
</dbReference>
<dbReference type="GO" id="GO:0042256">
    <property type="term" value="P:cytosolic ribosome assembly"/>
    <property type="evidence" value="ECO:0007669"/>
    <property type="project" value="InterPro"/>
</dbReference>
<dbReference type="Gene3D" id="3.30.70.240">
    <property type="match status" value="1"/>
</dbReference>
<dbReference type="Gene3D" id="3.30.1250.10">
    <property type="entry name" value="Ribosome maturation protein SBDS, N-terminal domain"/>
    <property type="match status" value="1"/>
</dbReference>
<dbReference type="Gene3D" id="1.10.10.900">
    <property type="entry name" value="SBDS protein C-terminal domain, subdomain 1"/>
    <property type="match status" value="1"/>
</dbReference>
<dbReference type="InterPro" id="IPR035647">
    <property type="entry name" value="EFG_III/V"/>
</dbReference>
<dbReference type="InterPro" id="IPR018023">
    <property type="entry name" value="Ribosome_mat_SBDS_CS"/>
</dbReference>
<dbReference type="InterPro" id="IPR036786">
    <property type="entry name" value="Ribosome_mat_SBDS_N_sf"/>
</dbReference>
<dbReference type="InterPro" id="IPR002140">
    <property type="entry name" value="Sdo1/SBDS"/>
</dbReference>
<dbReference type="InterPro" id="IPR039100">
    <property type="entry name" value="Sdo1/SBDS-like"/>
</dbReference>
<dbReference type="InterPro" id="IPR046928">
    <property type="entry name" value="SDO1/SBDS_C"/>
</dbReference>
<dbReference type="InterPro" id="IPR018978">
    <property type="entry name" value="SDO1/SBDS_central"/>
</dbReference>
<dbReference type="InterPro" id="IPR037188">
    <property type="entry name" value="Sdo1/SBDS_central_sf"/>
</dbReference>
<dbReference type="InterPro" id="IPR019783">
    <property type="entry name" value="SDO1/SBDS_N"/>
</dbReference>
<dbReference type="NCBIfam" id="TIGR00291">
    <property type="entry name" value="RNA_SBDS"/>
    <property type="match status" value="1"/>
</dbReference>
<dbReference type="PANTHER" id="PTHR10927">
    <property type="entry name" value="RIBOSOME MATURATION PROTEIN SBDS"/>
    <property type="match status" value="1"/>
</dbReference>
<dbReference type="PANTHER" id="PTHR10927:SF4">
    <property type="entry name" value="RIBOSOME MATURATION PROTEIN SDO1 HOMOLOG"/>
    <property type="match status" value="1"/>
</dbReference>
<dbReference type="Pfam" id="PF20268">
    <property type="entry name" value="SBDS_C"/>
    <property type="match status" value="1"/>
</dbReference>
<dbReference type="Pfam" id="PF09377">
    <property type="entry name" value="SBDS_domain_II"/>
    <property type="match status" value="1"/>
</dbReference>
<dbReference type="Pfam" id="PF01172">
    <property type="entry name" value="SBDS_N"/>
    <property type="match status" value="1"/>
</dbReference>
<dbReference type="SUPFAM" id="SSF54980">
    <property type="entry name" value="EF-G C-terminal domain-like"/>
    <property type="match status" value="1"/>
</dbReference>
<dbReference type="SUPFAM" id="SSF89895">
    <property type="entry name" value="FYSH domain"/>
    <property type="match status" value="1"/>
</dbReference>
<dbReference type="SUPFAM" id="SSF109728">
    <property type="entry name" value="Hypothetical protein AF0491, middle domain"/>
    <property type="match status" value="1"/>
</dbReference>
<dbReference type="PROSITE" id="PS01267">
    <property type="entry name" value="UPF0023"/>
    <property type="match status" value="1"/>
</dbReference>